<feature type="chain" id="PRO_0000085045" description="Benzene 1,2-dioxygenase subunit alpha">
    <location>
        <begin position="1"/>
        <end position="450"/>
    </location>
</feature>
<feature type="domain" description="Rieske" evidence="2">
    <location>
        <begin position="54"/>
        <end position="163"/>
    </location>
</feature>
<feature type="binding site" evidence="2">
    <location>
        <position position="96"/>
    </location>
    <ligand>
        <name>[2Fe-2S] cluster</name>
        <dbReference type="ChEBI" id="CHEBI:190135"/>
    </ligand>
</feature>
<feature type="binding site" evidence="2">
    <location>
        <position position="98"/>
    </location>
    <ligand>
        <name>[2Fe-2S] cluster</name>
        <dbReference type="ChEBI" id="CHEBI:190135"/>
    </ligand>
</feature>
<feature type="binding site" evidence="2">
    <location>
        <position position="116"/>
    </location>
    <ligand>
        <name>[2Fe-2S] cluster</name>
        <dbReference type="ChEBI" id="CHEBI:190135"/>
    </ligand>
</feature>
<feature type="binding site" evidence="2">
    <location>
        <position position="119"/>
    </location>
    <ligand>
        <name>[2Fe-2S] cluster</name>
        <dbReference type="ChEBI" id="CHEBI:190135"/>
    </ligand>
</feature>
<feature type="binding site" evidence="1">
    <location>
        <position position="222"/>
    </location>
    <ligand>
        <name>Fe cation</name>
        <dbReference type="ChEBI" id="CHEBI:24875"/>
    </ligand>
</feature>
<feature type="binding site" evidence="1">
    <location>
        <position position="228"/>
    </location>
    <ligand>
        <name>Fe cation</name>
        <dbReference type="ChEBI" id="CHEBI:24875"/>
    </ligand>
</feature>
<reference key="1">
    <citation type="journal article" date="1987" name="J. Bacteriol.">
        <title>Nucleotide sequencing and characterization of the genes encoding benzene oxidation enzymes of Pseudomonas putida.</title>
        <authorList>
            <person name="Irie S."/>
            <person name="Doi S."/>
            <person name="Yorifuji T."/>
            <person name="Takagi M."/>
            <person name="Yano K."/>
        </authorList>
    </citation>
    <scope>NUCLEOTIDE SEQUENCE [GENOMIC DNA]</scope>
    <source>
        <strain>BE-81</strain>
    </source>
</reference>
<sequence length="450" mass="50944">MNQTDTSPIRLRRSWNTSEIEALFDEHAGRIDPRIYTDEDLYQLELERVFARSWLLLGHETQIRKPGDYITTYMGEDPVVVVRQKDASIAVFLNQCRHRGMRICRADAGNAKAFTCSYHGWAYDTAGNLVNVPYEAESFACLNKKEWSPLKARVETYKGLIFANWDENAVDLDTYLGEAKFYMDHMLDRTEAGTEAIPGVQKWVIPCNWKFAAEQFCSDMYHAGTTSHLSGILAGLPEDLEMADLAPPTVGKQYRASWGGHGSGFYVGDPNLMLAIMGPKVTSYWTEGPASEKAAERLGSVERGSKLMVEHMTVFPTCSFLPGINTVRTWHPRGPNEVEVWAFTVVDADAPDDIKEEFRRQTLRTFSAGGVFEQDDGENWVEIQHILRGHKARSRPFNAEMSMDQTVDNDPVYPGRISNNVYSEEAARGLYAHWLRMMTSPDWDALKATR</sequence>
<organism>
    <name type="scientific">Pseudomonas putida</name>
    <name type="common">Arthrobacter siderocapsulatus</name>
    <dbReference type="NCBI Taxonomy" id="303"/>
    <lineage>
        <taxon>Bacteria</taxon>
        <taxon>Pseudomonadati</taxon>
        <taxon>Pseudomonadota</taxon>
        <taxon>Gammaproteobacteria</taxon>
        <taxon>Pseudomonadales</taxon>
        <taxon>Pseudomonadaceae</taxon>
        <taxon>Pseudomonas</taxon>
    </lineage>
</organism>
<gene>
    <name type="primary">bnzA</name>
    <name type="synonym">todC1</name>
</gene>
<name>BNZA_PSEPU</name>
<protein>
    <recommendedName>
        <fullName>Benzene 1,2-dioxygenase subunit alpha</fullName>
        <ecNumber>1.14.12.3</ecNumber>
    </recommendedName>
    <alternativeName>
        <fullName>Benzene 1,2-dioxygenase P1 subunit</fullName>
    </alternativeName>
    <alternativeName>
        <fullName>Toluene 2,3-dioxygenase subunit alpha</fullName>
        <ecNumber>1.14.12.11</ecNumber>
    </alternativeName>
</protein>
<keyword id="KW-0001">2Fe-2S</keyword>
<keyword id="KW-0058">Aromatic hydrocarbons catabolism</keyword>
<keyword id="KW-0223">Dioxygenase</keyword>
<keyword id="KW-0408">Iron</keyword>
<keyword id="KW-0411">Iron-sulfur</keyword>
<keyword id="KW-0479">Metal-binding</keyword>
<keyword id="KW-0520">NAD</keyword>
<keyword id="KW-0560">Oxidoreductase</keyword>
<proteinExistence type="inferred from homology"/>
<dbReference type="EC" id="1.14.12.3"/>
<dbReference type="EC" id="1.14.12.11"/>
<dbReference type="EMBL" id="M17904">
    <property type="protein sequence ID" value="AAA25735.1"/>
    <property type="status" value="ALT_FRAME"/>
    <property type="molecule type" value="Genomic_DNA"/>
</dbReference>
<dbReference type="PIR" id="A29830">
    <property type="entry name" value="A29830"/>
</dbReference>
<dbReference type="RefSeq" id="WP_012052601.1">
    <property type="nucleotide sequence ID" value="NZ_NHBC01000013.1"/>
</dbReference>
<dbReference type="SMR" id="P0C618"/>
<dbReference type="UniPathway" id="UPA00228"/>
<dbReference type="UniPathway" id="UPA00272">
    <property type="reaction ID" value="UER00391"/>
</dbReference>
<dbReference type="UniPathway" id="UPA00273"/>
<dbReference type="GO" id="GO:0051537">
    <property type="term" value="F:2 iron, 2 sulfur cluster binding"/>
    <property type="evidence" value="ECO:0007669"/>
    <property type="project" value="UniProtKB-KW"/>
</dbReference>
<dbReference type="GO" id="GO:0018619">
    <property type="term" value="F:benzene 1,2-dioxygenase activity"/>
    <property type="evidence" value="ECO:0007669"/>
    <property type="project" value="UniProtKB-EC"/>
</dbReference>
<dbReference type="GO" id="GO:0005506">
    <property type="term" value="F:iron ion binding"/>
    <property type="evidence" value="ECO:0007669"/>
    <property type="project" value="InterPro"/>
</dbReference>
<dbReference type="GO" id="GO:0018624">
    <property type="term" value="F:toluene dioxygenase activity"/>
    <property type="evidence" value="ECO:0007669"/>
    <property type="project" value="UniProtKB-EC"/>
</dbReference>
<dbReference type="GO" id="GO:0042203">
    <property type="term" value="P:toluene catabolic process"/>
    <property type="evidence" value="ECO:0007669"/>
    <property type="project" value="UniProtKB-UniPathway"/>
</dbReference>
<dbReference type="GO" id="GO:0042184">
    <property type="term" value="P:xylene catabolic process"/>
    <property type="evidence" value="ECO:0007669"/>
    <property type="project" value="UniProtKB-UniPathway"/>
</dbReference>
<dbReference type="CDD" id="cd08881">
    <property type="entry name" value="RHO_alpha_C_NDO-like"/>
    <property type="match status" value="1"/>
</dbReference>
<dbReference type="Gene3D" id="3.90.380.10">
    <property type="entry name" value="Naphthalene 1,2-dioxygenase Alpha Subunit, Chain A, domain 1"/>
    <property type="match status" value="1"/>
</dbReference>
<dbReference type="Gene3D" id="2.102.10.10">
    <property type="entry name" value="Rieske [2Fe-2S] iron-sulphur domain"/>
    <property type="match status" value="1"/>
</dbReference>
<dbReference type="InterPro" id="IPR043266">
    <property type="entry name" value="RHO_NdoB-like_C"/>
</dbReference>
<dbReference type="InterPro" id="IPR017941">
    <property type="entry name" value="Rieske_2Fe-2S"/>
</dbReference>
<dbReference type="InterPro" id="IPR036922">
    <property type="entry name" value="Rieske_2Fe-2S_sf"/>
</dbReference>
<dbReference type="InterPro" id="IPR015881">
    <property type="entry name" value="Ring-hydroxy_dOase_2Fe2S_BS"/>
</dbReference>
<dbReference type="InterPro" id="IPR015879">
    <property type="entry name" value="Ring_hydroxy_dOase_asu_C_dom"/>
</dbReference>
<dbReference type="InterPro" id="IPR001663">
    <property type="entry name" value="Rng_hydr_dOase-A"/>
</dbReference>
<dbReference type="PANTHER" id="PTHR43756:SF1">
    <property type="entry name" value="3-PHENYLPROPIONATE_CINNAMIC ACID DIOXYGENASE SUBUNIT ALPHA"/>
    <property type="match status" value="1"/>
</dbReference>
<dbReference type="PANTHER" id="PTHR43756">
    <property type="entry name" value="CHOLINE MONOOXYGENASE, CHLOROPLASTIC"/>
    <property type="match status" value="1"/>
</dbReference>
<dbReference type="Pfam" id="PF00355">
    <property type="entry name" value="Rieske"/>
    <property type="match status" value="1"/>
</dbReference>
<dbReference type="Pfam" id="PF00848">
    <property type="entry name" value="Ring_hydroxyl_A"/>
    <property type="match status" value="1"/>
</dbReference>
<dbReference type="PRINTS" id="PR00090">
    <property type="entry name" value="RNGDIOXGNASE"/>
</dbReference>
<dbReference type="SUPFAM" id="SSF55961">
    <property type="entry name" value="Bet v1-like"/>
    <property type="match status" value="1"/>
</dbReference>
<dbReference type="SUPFAM" id="SSF50022">
    <property type="entry name" value="ISP domain"/>
    <property type="match status" value="1"/>
</dbReference>
<dbReference type="PROSITE" id="PS51296">
    <property type="entry name" value="RIESKE"/>
    <property type="match status" value="1"/>
</dbReference>
<dbReference type="PROSITE" id="PS00570">
    <property type="entry name" value="RING_HYDROXYL_ALPHA"/>
    <property type="match status" value="1"/>
</dbReference>
<evidence type="ECO:0000250" key="1"/>
<evidence type="ECO:0000255" key="2">
    <source>
        <dbReference type="PROSITE-ProRule" id="PRU00628"/>
    </source>
</evidence>
<evidence type="ECO:0000305" key="3"/>
<comment type="function">
    <text>Catalyzes both the oxidation of benzene and toluene.</text>
</comment>
<comment type="catalytic activity">
    <reaction>
        <text>benzene + NADH + O2 + H(+) = cis-1,2-dihydrobenzene-1,2-diol + NAD(+)</text>
        <dbReference type="Rhea" id="RHEA:13813"/>
        <dbReference type="ChEBI" id="CHEBI:15378"/>
        <dbReference type="ChEBI" id="CHEBI:15379"/>
        <dbReference type="ChEBI" id="CHEBI:16190"/>
        <dbReference type="ChEBI" id="CHEBI:16716"/>
        <dbReference type="ChEBI" id="CHEBI:57540"/>
        <dbReference type="ChEBI" id="CHEBI:57945"/>
        <dbReference type="EC" id="1.14.12.3"/>
    </reaction>
</comment>
<comment type="catalytic activity">
    <reaction>
        <text>toluene + NADH + O2 + H(+) = (1S,2R)-3-methylcyclohexa-3,5-diene-1,2-diol + NAD(+)</text>
        <dbReference type="Rhea" id="RHEA:16737"/>
        <dbReference type="ChEBI" id="CHEBI:15378"/>
        <dbReference type="ChEBI" id="CHEBI:15379"/>
        <dbReference type="ChEBI" id="CHEBI:15565"/>
        <dbReference type="ChEBI" id="CHEBI:17578"/>
        <dbReference type="ChEBI" id="CHEBI:57540"/>
        <dbReference type="ChEBI" id="CHEBI:57945"/>
        <dbReference type="EC" id="1.14.12.11"/>
    </reaction>
</comment>
<comment type="cofactor">
    <cofactor evidence="2">
        <name>[2Fe-2S] cluster</name>
        <dbReference type="ChEBI" id="CHEBI:190135"/>
    </cofactor>
    <text evidence="2">Binds 1 [2Fe-2S] cluster per subunit.</text>
</comment>
<comment type="cofactor">
    <cofactor evidence="1">
        <name>Fe cation</name>
        <dbReference type="ChEBI" id="CHEBI:24875"/>
    </cofactor>
    <text evidence="1">Binds 1 Fe cation per subunit.</text>
</comment>
<comment type="pathway">
    <text>Aromatic compound metabolism; benzene degradation; catechol from benzene: step 1/2.</text>
</comment>
<comment type="pathway">
    <text>Xenobiotic degradation; toluene degradation.</text>
</comment>
<comment type="pathway">
    <text>Xenobiotic degradation; xylene degradation.</text>
</comment>
<comment type="subunit">
    <text>This dioxygenase system consists of four proteins: the two subunits of the hydroxylase component (BnzA and BnzB), a ferredoxin (BnzC) and a ferredoxin reductase (BnzD).</text>
</comment>
<comment type="similarity">
    <text evidence="3">Belongs to the bacterial ring-hydroxylating dioxygenase alpha subunit family.</text>
</comment>
<comment type="sequence caution" evidence="3">
    <conflict type="frameshift">
        <sequence resource="EMBL-CDS" id="AAA25735"/>
    </conflict>
</comment>
<accession>P0C618</accession>
<accession>P08084</accession>
<accession>P13450</accession>